<proteinExistence type="inferred from homology"/>
<feature type="chain" id="PRO_0000130070" description="Small ribosomal subunit protein uS3">
    <location>
        <begin position="1"/>
        <end position="219"/>
    </location>
</feature>
<feature type="domain" description="KH type-2" evidence="1">
    <location>
        <begin position="38"/>
        <end position="106"/>
    </location>
</feature>
<sequence>MGQKVNPIGLRVGVIRDWESRWFAEKDYATLLHEDIKIREYINVRLKDSAVAKVEIERAANRVNVTIHTAKPGMVIGKGGTEVEALRKALNQLTGKRVHINILEVKRADLNAKLVGENIARQLENRVSFRRAQKQVIQRAMRAGAKGIKTQVSGRLGGADIARAESYSEGTVPLHTLRADIDYAAVEADTTYGKLGVKVWIYRGEVLPTKKKASEEGGK</sequence>
<evidence type="ECO:0000255" key="1">
    <source>
        <dbReference type="HAMAP-Rule" id="MF_01309"/>
    </source>
</evidence>
<evidence type="ECO:0000305" key="2"/>
<gene>
    <name evidence="1" type="primary">rpsC</name>
    <name type="ordered locus">BT9727_0112</name>
</gene>
<accession>Q6HPQ2</accession>
<reference key="1">
    <citation type="journal article" date="2006" name="J. Bacteriol.">
        <title>Pathogenomic sequence analysis of Bacillus cereus and Bacillus thuringiensis isolates closely related to Bacillus anthracis.</title>
        <authorList>
            <person name="Han C.S."/>
            <person name="Xie G."/>
            <person name="Challacombe J.F."/>
            <person name="Altherr M.R."/>
            <person name="Bhotika S.S."/>
            <person name="Bruce D."/>
            <person name="Campbell C.S."/>
            <person name="Campbell M.L."/>
            <person name="Chen J."/>
            <person name="Chertkov O."/>
            <person name="Cleland C."/>
            <person name="Dimitrijevic M."/>
            <person name="Doggett N.A."/>
            <person name="Fawcett J.J."/>
            <person name="Glavina T."/>
            <person name="Goodwin L.A."/>
            <person name="Hill K.K."/>
            <person name="Hitchcock P."/>
            <person name="Jackson P.J."/>
            <person name="Keim P."/>
            <person name="Kewalramani A.R."/>
            <person name="Longmire J."/>
            <person name="Lucas S."/>
            <person name="Malfatti S."/>
            <person name="McMurry K."/>
            <person name="Meincke L.J."/>
            <person name="Misra M."/>
            <person name="Moseman B.L."/>
            <person name="Mundt M."/>
            <person name="Munk A.C."/>
            <person name="Okinaka R.T."/>
            <person name="Parson-Quintana B."/>
            <person name="Reilly L.P."/>
            <person name="Richardson P."/>
            <person name="Robinson D.L."/>
            <person name="Rubin E."/>
            <person name="Saunders E."/>
            <person name="Tapia R."/>
            <person name="Tesmer J.G."/>
            <person name="Thayer N."/>
            <person name="Thompson L.S."/>
            <person name="Tice H."/>
            <person name="Ticknor L.O."/>
            <person name="Wills P.L."/>
            <person name="Brettin T.S."/>
            <person name="Gilna P."/>
        </authorList>
    </citation>
    <scope>NUCLEOTIDE SEQUENCE [LARGE SCALE GENOMIC DNA]</scope>
    <source>
        <strain>97-27</strain>
    </source>
</reference>
<comment type="function">
    <text evidence="1">Binds the lower part of the 30S subunit head. Binds mRNA in the 70S ribosome, positioning it for translation.</text>
</comment>
<comment type="subunit">
    <text evidence="1">Part of the 30S ribosomal subunit. Forms a tight complex with proteins S10 and S14.</text>
</comment>
<comment type="similarity">
    <text evidence="1">Belongs to the universal ribosomal protein uS3 family.</text>
</comment>
<dbReference type="EMBL" id="AE017355">
    <property type="protein sequence ID" value="AAT63865.1"/>
    <property type="molecule type" value="Genomic_DNA"/>
</dbReference>
<dbReference type="RefSeq" id="WP_000529956.1">
    <property type="nucleotide sequence ID" value="NC_005957.1"/>
</dbReference>
<dbReference type="RefSeq" id="YP_034468.1">
    <property type="nucleotide sequence ID" value="NC_005957.1"/>
</dbReference>
<dbReference type="SMR" id="Q6HPQ2"/>
<dbReference type="GeneID" id="93010937"/>
<dbReference type="KEGG" id="btk:BT9727_0112"/>
<dbReference type="PATRIC" id="fig|281309.8.peg.113"/>
<dbReference type="HOGENOM" id="CLU_058591_0_2_9"/>
<dbReference type="Proteomes" id="UP000001301">
    <property type="component" value="Chromosome"/>
</dbReference>
<dbReference type="GO" id="GO:0022627">
    <property type="term" value="C:cytosolic small ribosomal subunit"/>
    <property type="evidence" value="ECO:0007669"/>
    <property type="project" value="TreeGrafter"/>
</dbReference>
<dbReference type="GO" id="GO:0003729">
    <property type="term" value="F:mRNA binding"/>
    <property type="evidence" value="ECO:0007669"/>
    <property type="project" value="UniProtKB-UniRule"/>
</dbReference>
<dbReference type="GO" id="GO:0019843">
    <property type="term" value="F:rRNA binding"/>
    <property type="evidence" value="ECO:0007669"/>
    <property type="project" value="UniProtKB-UniRule"/>
</dbReference>
<dbReference type="GO" id="GO:0003735">
    <property type="term" value="F:structural constituent of ribosome"/>
    <property type="evidence" value="ECO:0007669"/>
    <property type="project" value="InterPro"/>
</dbReference>
<dbReference type="GO" id="GO:0006412">
    <property type="term" value="P:translation"/>
    <property type="evidence" value="ECO:0007669"/>
    <property type="project" value="UniProtKB-UniRule"/>
</dbReference>
<dbReference type="CDD" id="cd02412">
    <property type="entry name" value="KH-II_30S_S3"/>
    <property type="match status" value="1"/>
</dbReference>
<dbReference type="FunFam" id="3.30.1140.32:FF:000001">
    <property type="entry name" value="30S ribosomal protein S3"/>
    <property type="match status" value="1"/>
</dbReference>
<dbReference type="FunFam" id="3.30.300.20:FF:000001">
    <property type="entry name" value="30S ribosomal protein S3"/>
    <property type="match status" value="1"/>
</dbReference>
<dbReference type="Gene3D" id="3.30.300.20">
    <property type="match status" value="1"/>
</dbReference>
<dbReference type="Gene3D" id="3.30.1140.32">
    <property type="entry name" value="Ribosomal protein S3, C-terminal domain"/>
    <property type="match status" value="1"/>
</dbReference>
<dbReference type="HAMAP" id="MF_01309_B">
    <property type="entry name" value="Ribosomal_uS3_B"/>
    <property type="match status" value="1"/>
</dbReference>
<dbReference type="InterPro" id="IPR004087">
    <property type="entry name" value="KH_dom"/>
</dbReference>
<dbReference type="InterPro" id="IPR015946">
    <property type="entry name" value="KH_dom-like_a/b"/>
</dbReference>
<dbReference type="InterPro" id="IPR004044">
    <property type="entry name" value="KH_dom_type_2"/>
</dbReference>
<dbReference type="InterPro" id="IPR009019">
    <property type="entry name" value="KH_sf_prok-type"/>
</dbReference>
<dbReference type="InterPro" id="IPR036419">
    <property type="entry name" value="Ribosomal_S3_C_sf"/>
</dbReference>
<dbReference type="InterPro" id="IPR005704">
    <property type="entry name" value="Ribosomal_uS3_bac-typ"/>
</dbReference>
<dbReference type="InterPro" id="IPR001351">
    <property type="entry name" value="Ribosomal_uS3_C"/>
</dbReference>
<dbReference type="InterPro" id="IPR018280">
    <property type="entry name" value="Ribosomal_uS3_CS"/>
</dbReference>
<dbReference type="NCBIfam" id="TIGR01009">
    <property type="entry name" value="rpsC_bact"/>
    <property type="match status" value="1"/>
</dbReference>
<dbReference type="PANTHER" id="PTHR11760">
    <property type="entry name" value="30S/40S RIBOSOMAL PROTEIN S3"/>
    <property type="match status" value="1"/>
</dbReference>
<dbReference type="PANTHER" id="PTHR11760:SF19">
    <property type="entry name" value="SMALL RIBOSOMAL SUBUNIT PROTEIN US3C"/>
    <property type="match status" value="1"/>
</dbReference>
<dbReference type="Pfam" id="PF07650">
    <property type="entry name" value="KH_2"/>
    <property type="match status" value="1"/>
</dbReference>
<dbReference type="Pfam" id="PF00189">
    <property type="entry name" value="Ribosomal_S3_C"/>
    <property type="match status" value="1"/>
</dbReference>
<dbReference type="SMART" id="SM00322">
    <property type="entry name" value="KH"/>
    <property type="match status" value="1"/>
</dbReference>
<dbReference type="SUPFAM" id="SSF54814">
    <property type="entry name" value="Prokaryotic type KH domain (KH-domain type II)"/>
    <property type="match status" value="1"/>
</dbReference>
<dbReference type="SUPFAM" id="SSF54821">
    <property type="entry name" value="Ribosomal protein S3 C-terminal domain"/>
    <property type="match status" value="1"/>
</dbReference>
<dbReference type="PROSITE" id="PS50823">
    <property type="entry name" value="KH_TYPE_2"/>
    <property type="match status" value="1"/>
</dbReference>
<dbReference type="PROSITE" id="PS00548">
    <property type="entry name" value="RIBOSOMAL_S3"/>
    <property type="match status" value="1"/>
</dbReference>
<keyword id="KW-0687">Ribonucleoprotein</keyword>
<keyword id="KW-0689">Ribosomal protein</keyword>
<keyword id="KW-0694">RNA-binding</keyword>
<keyword id="KW-0699">rRNA-binding</keyword>
<name>RS3_BACHK</name>
<protein>
    <recommendedName>
        <fullName evidence="1">Small ribosomal subunit protein uS3</fullName>
    </recommendedName>
    <alternativeName>
        <fullName evidence="2">30S ribosomal protein S3</fullName>
    </alternativeName>
</protein>
<organism>
    <name type="scientific">Bacillus thuringiensis subsp. konkukian (strain 97-27)</name>
    <dbReference type="NCBI Taxonomy" id="281309"/>
    <lineage>
        <taxon>Bacteria</taxon>
        <taxon>Bacillati</taxon>
        <taxon>Bacillota</taxon>
        <taxon>Bacilli</taxon>
        <taxon>Bacillales</taxon>
        <taxon>Bacillaceae</taxon>
        <taxon>Bacillus</taxon>
        <taxon>Bacillus cereus group</taxon>
    </lineage>
</organism>